<evidence type="ECO:0000255" key="1">
    <source>
        <dbReference type="PROSITE-ProRule" id="PRU00227"/>
    </source>
</evidence>
<evidence type="ECO:0000256" key="2">
    <source>
        <dbReference type="SAM" id="MobiDB-lite"/>
    </source>
</evidence>
<evidence type="ECO:0000269" key="3">
    <source>
    </source>
</evidence>
<evidence type="ECO:0000303" key="4">
    <source>
    </source>
</evidence>
<feature type="chain" id="PRO_0000449444" description="Phomacin cluster regulator phmR">
    <location>
        <begin position="1"/>
        <end position="564"/>
    </location>
</feature>
<feature type="DNA-binding region" description="Zn(2)-C6 fungal-type" evidence="1">
    <location>
        <begin position="33"/>
        <end position="64"/>
    </location>
</feature>
<feature type="region of interest" description="Disordered" evidence="2">
    <location>
        <begin position="68"/>
        <end position="93"/>
    </location>
</feature>
<feature type="region of interest" description="Disordered" evidence="2">
    <location>
        <begin position="152"/>
        <end position="197"/>
    </location>
</feature>
<feature type="region of interest" description="Disordered" evidence="2">
    <location>
        <begin position="252"/>
        <end position="278"/>
    </location>
</feature>
<feature type="compositionally biased region" description="Polar residues" evidence="2">
    <location>
        <begin position="182"/>
        <end position="192"/>
    </location>
</feature>
<feature type="compositionally biased region" description="Polar residues" evidence="2">
    <location>
        <begin position="258"/>
        <end position="278"/>
    </location>
</feature>
<gene>
    <name evidence="4" type="primary">phmR</name>
    <name type="ORF">SNOG_00307</name>
</gene>
<dbReference type="EMBL" id="CH445325">
    <property type="protein sequence ID" value="EAT91802.1"/>
    <property type="molecule type" value="Genomic_DNA"/>
</dbReference>
<dbReference type="RefSeq" id="XP_001790997.1">
    <property type="nucleotide sequence ID" value="XM_001790945.1"/>
</dbReference>
<dbReference type="STRING" id="321614.Q0V6Q7"/>
<dbReference type="EnsemblFungi" id="SNOT_00307">
    <property type="protein sequence ID" value="SNOT_00307"/>
    <property type="gene ID" value="SNOG_00307"/>
</dbReference>
<dbReference type="GeneID" id="5968034"/>
<dbReference type="KEGG" id="pno:SNOG_00307"/>
<dbReference type="VEuPathDB" id="FungiDB:JI435_003070"/>
<dbReference type="eggNOG" id="ENOG502SYRD">
    <property type="taxonomic scope" value="Eukaryota"/>
</dbReference>
<dbReference type="HOGENOM" id="CLU_494289_0_0_1"/>
<dbReference type="InParanoid" id="Q0V6Q7"/>
<dbReference type="OMA" id="HILRAYD"/>
<dbReference type="OrthoDB" id="3434319at2759"/>
<dbReference type="Proteomes" id="UP000001055">
    <property type="component" value="Unassembled WGS sequence"/>
</dbReference>
<dbReference type="GO" id="GO:0005634">
    <property type="term" value="C:nucleus"/>
    <property type="evidence" value="ECO:0007669"/>
    <property type="project" value="UniProtKB-SubCell"/>
</dbReference>
<dbReference type="GO" id="GO:0003677">
    <property type="term" value="F:DNA binding"/>
    <property type="evidence" value="ECO:0007669"/>
    <property type="project" value="UniProtKB-KW"/>
</dbReference>
<dbReference type="GO" id="GO:0000981">
    <property type="term" value="F:DNA-binding transcription factor activity, RNA polymerase II-specific"/>
    <property type="evidence" value="ECO:0007669"/>
    <property type="project" value="InterPro"/>
</dbReference>
<dbReference type="GO" id="GO:0008270">
    <property type="term" value="F:zinc ion binding"/>
    <property type="evidence" value="ECO:0007669"/>
    <property type="project" value="InterPro"/>
</dbReference>
<dbReference type="CDD" id="cd00067">
    <property type="entry name" value="GAL4"/>
    <property type="match status" value="1"/>
</dbReference>
<dbReference type="Gene3D" id="4.10.240.10">
    <property type="entry name" value="Zn(2)-C6 fungal-type DNA-binding domain"/>
    <property type="match status" value="1"/>
</dbReference>
<dbReference type="InterPro" id="IPR036864">
    <property type="entry name" value="Zn2-C6_fun-type_DNA-bd_sf"/>
</dbReference>
<dbReference type="InterPro" id="IPR001138">
    <property type="entry name" value="Zn2Cys6_DnaBD"/>
</dbReference>
<dbReference type="Pfam" id="PF00172">
    <property type="entry name" value="Zn_clus"/>
    <property type="match status" value="1"/>
</dbReference>
<dbReference type="SMART" id="SM00066">
    <property type="entry name" value="GAL4"/>
    <property type="match status" value="1"/>
</dbReference>
<dbReference type="SUPFAM" id="SSF57701">
    <property type="entry name" value="Zn2/Cys6 DNA-binding domain"/>
    <property type="match status" value="1"/>
</dbReference>
<dbReference type="PROSITE" id="PS00463">
    <property type="entry name" value="ZN2_CY6_FUNGAL_1"/>
    <property type="match status" value="1"/>
</dbReference>
<dbReference type="PROSITE" id="PS50048">
    <property type="entry name" value="ZN2_CY6_FUNGAL_2"/>
    <property type="match status" value="1"/>
</dbReference>
<sequence length="564" mass="61552">MEGQAQPYPFAAVQRGTEVAPQAPFNFSRRYACDRCRGHKLRCIRDQMTVDSPCQRCRKAREKCTIGSSTRPVPARLNRSSQGHKLPGATSSASLTTAAPALSMPPQQALAWATGLGDTEQGDALHLSSVPWLDMFDSAMLDSACDSNHELDFADRSSGSGSGSRGAADDQDGPGDGRVHTITPTSQGTTAVANPFLPGHEFDFSPRFDMPGEQCNSDFEKDCTGAPVHAHLPADERSHVASVEFMHHPVAPIHPPTMASSHRTHSTASNDSSKDSTTGVRDACIQELNELSSTLTKDLHTVVDCKLASSFLFTRSNKGPDEYLFKTLDGSSSQESAIGRMLQGSEKFLDIMKRFNEPAQSAPPFVGLSLRVDAHDFGLLAEAVDGSKNSSEATQLDRRWRILHSYLERRNESPNPLSFGSWLGDNLTYGLARKPDMTAKAAVLLCYTNLLWIYETVFFVICHTLECSPSLAPAIKLPQTVPGLEINGFVLQNHPSLQIKILTQVSSYMLDSVEKALQNMLSDSTFQALLETVLQQEGLQYSPGEETGMISVRCLIDKVNKMLD</sequence>
<keyword id="KW-0238">DNA-binding</keyword>
<keyword id="KW-0479">Metal-binding</keyword>
<keyword id="KW-0539">Nucleus</keyword>
<keyword id="KW-0804">Transcription</keyword>
<keyword id="KW-0805">Transcription regulation</keyword>
<keyword id="KW-0843">Virulence</keyword>
<keyword id="KW-0862">Zinc</keyword>
<name>PHMR_PHANO</name>
<protein>
    <recommendedName>
        <fullName evidence="4">Phomacin cluster regulator phmR</fullName>
    </recommendedName>
    <alternativeName>
        <fullName evidence="4">Phomacin biosynthesis cluster protein R</fullName>
    </alternativeName>
</protein>
<organism>
    <name type="scientific">Phaeosphaeria nodorum (strain SN15 / ATCC MYA-4574 / FGSC 10173)</name>
    <name type="common">Glume blotch fungus</name>
    <name type="synonym">Parastagonospora nodorum</name>
    <dbReference type="NCBI Taxonomy" id="321614"/>
    <lineage>
        <taxon>Eukaryota</taxon>
        <taxon>Fungi</taxon>
        <taxon>Dikarya</taxon>
        <taxon>Ascomycota</taxon>
        <taxon>Pezizomycotina</taxon>
        <taxon>Dothideomycetes</taxon>
        <taxon>Pleosporomycetidae</taxon>
        <taxon>Pleosporales</taxon>
        <taxon>Pleosporineae</taxon>
        <taxon>Phaeosphaeriaceae</taxon>
        <taxon>Parastagonospora</taxon>
    </lineage>
</organism>
<proteinExistence type="inferred from homology"/>
<reference key="1">
    <citation type="journal article" date="2007" name="Plant Cell">
        <title>Dothideomycete-plant interactions illuminated by genome sequencing and EST analysis of the wheat pathogen Stagonospora nodorum.</title>
        <authorList>
            <person name="Hane J.K."/>
            <person name="Lowe R.G.T."/>
            <person name="Solomon P.S."/>
            <person name="Tan K.-C."/>
            <person name="Schoch C.L."/>
            <person name="Spatafora J.W."/>
            <person name="Crous P.W."/>
            <person name="Kodira C.D."/>
            <person name="Birren B.W."/>
            <person name="Galagan J.E."/>
            <person name="Torriani S.F.F."/>
            <person name="McDonald B.A."/>
            <person name="Oliver R.P."/>
        </authorList>
    </citation>
    <scope>NUCLEOTIDE SEQUENCE [LARGE SCALE GENOMIC DNA]</scope>
    <source>
        <strain>SN15 / ATCC MYA-4574 / FGSC 10173</strain>
    </source>
</reference>
<reference key="2">
    <citation type="journal article" date="2020" name="ACS Chem. Biol.">
        <title>Genomics-driven discovery of phytotoxic cytochalasans involved in the virulence of the wheat pathogen Parastagonospora nodorum.</title>
        <authorList>
            <person name="Li H."/>
            <person name="Wei H."/>
            <person name="Hu J."/>
            <person name="Lacey E."/>
            <person name="Sobolev A.N."/>
            <person name="Stubbs K.A."/>
            <person name="Solomon P.S."/>
            <person name="Chooi Y.H."/>
        </authorList>
    </citation>
    <scope>FUNCTION</scope>
    <scope>PATHWAY</scope>
</reference>
<accession>Q0V6Q7</accession>
<comment type="function">
    <text evidence="3">Transcription factor that specifically regulates the expression of the gene cluster that mediates the biosynthesis of the mycotoxins phomacins, leucine-derived cytochalasans with potent actin polymerization-inhibitory activities and monocot-specific antigerminative activities.</text>
</comment>
<comment type="subcellular location">
    <subcellularLocation>
        <location evidence="1">Nucleus</location>
    </subcellularLocation>
</comment>